<name>VG41_HAEIN</name>
<gene>
    <name type="ordered locus">HI_1513</name>
</gene>
<sequence length="127" mass="13978">MKLMLETGLMFGEEAQLEVTMRELTTGDLLDAEMAAERLVMTPEGEAVLAKSPALFGYELLRRQIASVGKINGPISMRQLRSLTTEDLNRISLYAQSWESAKAEQVVSRGRLDTADQETGKDLSAVS</sequence>
<organism>
    <name type="scientific">Haemophilus influenzae (strain ATCC 51907 / DSM 11121 / KW20 / Rd)</name>
    <dbReference type="NCBI Taxonomy" id="71421"/>
    <lineage>
        <taxon>Bacteria</taxon>
        <taxon>Pseudomonadati</taxon>
        <taxon>Pseudomonadota</taxon>
        <taxon>Gammaproteobacteria</taxon>
        <taxon>Pasteurellales</taxon>
        <taxon>Pasteurellaceae</taxon>
        <taxon>Haemophilus</taxon>
    </lineage>
</organism>
<protein>
    <recommendedName>
        <fullName>Mu-like prophage FluMu protein gp41</fullName>
    </recommendedName>
</protein>
<proteinExistence type="predicted"/>
<comment type="similarity">
    <text evidence="2">To phage Mu protein gp41.</text>
</comment>
<evidence type="ECO:0000256" key="1">
    <source>
        <dbReference type="SAM" id="MobiDB-lite"/>
    </source>
</evidence>
<evidence type="ECO:0000305" key="2"/>
<dbReference type="EMBL" id="L42023">
    <property type="protein sequence ID" value="AAC23160.1"/>
    <property type="molecule type" value="Genomic_DNA"/>
</dbReference>
<dbReference type="PIR" id="B64034">
    <property type="entry name" value="B64034"/>
</dbReference>
<dbReference type="RefSeq" id="NP_439663.1">
    <property type="nucleotide sequence ID" value="NC_000907.1"/>
</dbReference>
<dbReference type="STRING" id="71421.HI_1513"/>
<dbReference type="EnsemblBacteria" id="AAC23160">
    <property type="protein sequence ID" value="AAC23160"/>
    <property type="gene ID" value="HI_1513"/>
</dbReference>
<dbReference type="KEGG" id="hin:HI_1513"/>
<dbReference type="PATRIC" id="fig|71421.8.peg.1583"/>
<dbReference type="eggNOG" id="COG4518">
    <property type="taxonomic scope" value="Bacteria"/>
</dbReference>
<dbReference type="HOGENOM" id="CLU_150549_0_0_6"/>
<dbReference type="OrthoDB" id="5677360at2"/>
<dbReference type="BioCyc" id="HINF71421:G1GJ1-1536-MONOMER"/>
<dbReference type="Proteomes" id="UP000000579">
    <property type="component" value="Chromosome"/>
</dbReference>
<dbReference type="InterPro" id="IPR056974">
    <property type="entry name" value="Tail_Gp41-like"/>
</dbReference>
<dbReference type="Pfam" id="PF23746">
    <property type="entry name" value="Gp41_Mu"/>
    <property type="match status" value="1"/>
</dbReference>
<feature type="chain" id="PRO_0000077835" description="Mu-like prophage FluMu protein gp41">
    <location>
        <begin position="1"/>
        <end position="127"/>
    </location>
</feature>
<feature type="region of interest" description="Disordered" evidence="1">
    <location>
        <begin position="107"/>
        <end position="127"/>
    </location>
</feature>
<feature type="compositionally biased region" description="Basic and acidic residues" evidence="1">
    <location>
        <begin position="110"/>
        <end position="121"/>
    </location>
</feature>
<keyword id="KW-1185">Reference proteome</keyword>
<accession>P44235</accession>
<reference key="1">
    <citation type="journal article" date="1995" name="Science">
        <title>Whole-genome random sequencing and assembly of Haemophilus influenzae Rd.</title>
        <authorList>
            <person name="Fleischmann R.D."/>
            <person name="Adams M.D."/>
            <person name="White O."/>
            <person name="Clayton R.A."/>
            <person name="Kirkness E.F."/>
            <person name="Kerlavage A.R."/>
            <person name="Bult C.J."/>
            <person name="Tomb J.-F."/>
            <person name="Dougherty B.A."/>
            <person name="Merrick J.M."/>
            <person name="McKenney K."/>
            <person name="Sutton G.G."/>
            <person name="FitzHugh W."/>
            <person name="Fields C.A."/>
            <person name="Gocayne J.D."/>
            <person name="Scott J.D."/>
            <person name="Shirley R."/>
            <person name="Liu L.-I."/>
            <person name="Glodek A."/>
            <person name="Kelley J.M."/>
            <person name="Weidman J.F."/>
            <person name="Phillips C.A."/>
            <person name="Spriggs T."/>
            <person name="Hedblom E."/>
            <person name="Cotton M.D."/>
            <person name="Utterback T.R."/>
            <person name="Hanna M.C."/>
            <person name="Nguyen D.T."/>
            <person name="Saudek D.M."/>
            <person name="Brandon R.C."/>
            <person name="Fine L.D."/>
            <person name="Fritchman J.L."/>
            <person name="Fuhrmann J.L."/>
            <person name="Geoghagen N.S.M."/>
            <person name="Gnehm C.L."/>
            <person name="McDonald L.A."/>
            <person name="Small K.V."/>
            <person name="Fraser C.M."/>
            <person name="Smith H.O."/>
            <person name="Venter J.C."/>
        </authorList>
    </citation>
    <scope>NUCLEOTIDE SEQUENCE [LARGE SCALE GENOMIC DNA]</scope>
    <source>
        <strain>ATCC 51907 / DSM 11121 / KW20 / Rd</strain>
    </source>
</reference>